<reference key="1">
    <citation type="journal article" date="1988" name="Nucleic Acids Res.">
        <title>Genome organization of the killer plasmid pGKL2 from Kluyveromyces lactis.</title>
        <authorList>
            <person name="Tommasino M."/>
            <person name="Ricci S."/>
            <person name="Galeotti C.L."/>
        </authorList>
    </citation>
    <scope>NUCLEOTIDE SEQUENCE [GENOMIC DNA]</scope>
    <source>
        <strain>ATCC 8585 / CBS 2359 / DSM 70799 / NBRC 1267 / NRRL Y-1140 / WM37</strain>
    </source>
</reference>
<keyword id="KW-0614">Plasmid</keyword>
<proteinExistence type="predicted"/>
<comment type="function">
    <text>The presence of the two linear plasmids, termed pGKL1 and pGKL2, in strains of Kluyveromyces lactis confers the killer phenotype to the host cell, by promoting the secretion of a toxin able to inhibit the growth of sensitive strains.</text>
</comment>
<accession>P05469</accession>
<protein>
    <recommendedName>
        <fullName>Uncharacterized killer plasmid pGKl-2 protein 3</fullName>
    </recommendedName>
</protein>
<feature type="chain" id="PRO_0000066278" description="Uncharacterized killer plasmid pGKl-2 protein 3">
    <location>
        <begin position="1"/>
        <end position="594"/>
    </location>
</feature>
<geneLocation type="plasmid">
    <name>pGKl-2</name>
</geneLocation>
<organism>
    <name type="scientific">Kluyveromyces lactis (strain ATCC 8585 / CBS 2359 / DSM 70799 / NBRC 1267 / NRRL Y-1140 / WM37)</name>
    <name type="common">Yeast</name>
    <name type="synonym">Candida sphaerica</name>
    <dbReference type="NCBI Taxonomy" id="284590"/>
    <lineage>
        <taxon>Eukaryota</taxon>
        <taxon>Fungi</taxon>
        <taxon>Dikarya</taxon>
        <taxon>Ascomycota</taxon>
        <taxon>Saccharomycotina</taxon>
        <taxon>Saccharomycetes</taxon>
        <taxon>Saccharomycetales</taxon>
        <taxon>Saccharomycetaceae</taxon>
        <taxon>Kluyveromyces</taxon>
    </lineage>
</organism>
<name>YKP3_KLULA</name>
<dbReference type="EMBL" id="X07776">
    <property type="protein sequence ID" value="CAA30604.1"/>
    <property type="molecule type" value="Genomic_DNA"/>
</dbReference>
<dbReference type="PIR" id="S00961">
    <property type="entry name" value="S00961"/>
</dbReference>
<dbReference type="SMR" id="P05469"/>
<dbReference type="PaxDb" id="284590-P05469"/>
<dbReference type="InParanoid" id="P05469"/>
<dbReference type="Gene3D" id="3.30.470.30">
    <property type="entry name" value="DNA ligase/mRNA capping enzyme"/>
    <property type="match status" value="1"/>
</dbReference>
<dbReference type="Gene3D" id="3.40.50.150">
    <property type="entry name" value="Vaccinia Virus protein VP39"/>
    <property type="match status" value="1"/>
</dbReference>
<dbReference type="InterPro" id="IPR029063">
    <property type="entry name" value="SAM-dependent_MTases_sf"/>
</dbReference>
<dbReference type="SUPFAM" id="SSF56091">
    <property type="entry name" value="DNA ligase/mRNA capping enzyme, catalytic domain"/>
    <property type="match status" value="1"/>
</dbReference>
<dbReference type="SUPFAM" id="SSF53335">
    <property type="entry name" value="S-adenosyl-L-methionine-dependent methyltransferases"/>
    <property type="match status" value="1"/>
</dbReference>
<sequence>MSGSFRSNFSIASIHLRLYETIKSQSRIILLFCRGMFKRFAKYKSNLESAMVDVELEARIQIPKPTNIIFEDETVITYYRSTMYPSLIFRRINNGKLNSKETVEKIKYGEVTICLSIEQTYSNMDIKFPIIPANKRTISRKRICENPIVDITKCGDQYTLEIEFDYSNYMHIEKILKEWKNPYWPPVKPMEISSSNLAKKLANNEQWCISPKADGIHVLVYSDGENQFIVHTNGYTEGDTNIKVNRIFEGELMSNGEILYFDCLMWENKNITKLDYIARYKYLENMNKKEIILFNNIYAIKKYLDKKHDFETDGYIITNIKNRKKVYKSKFKNTVDLRYKNGYLLLENEEFSERSPKNVNEQLEEDKIYEFDMEMNLIRERKDKTIANYKMPYDDNPIYKIAHSIGVPTLRYYHNKIKRELLSMLPKTTLLDIGSAKGGDITKWTNLKFEKVYAVDPNLELRQRSKKVVEIRENIEDVYKMFDYESVSLFFVPWNDKFMDVINKAKYFVLICMDKPVTVKEDCFECKIENEKVILKIPDTQTSEYVEENLIKYTDVFKKLKNWKHMKINRTMNTGSAQEIELSRMYSYHFFSKK</sequence>